<geneLocation type="chloroplast"/>
<name>RR5_CYACA</name>
<gene>
    <name type="primary">rps5</name>
</gene>
<evidence type="ECO:0000250" key="1"/>
<evidence type="ECO:0000305" key="2"/>
<organism>
    <name type="scientific">Cyanidium caldarium</name>
    <name type="common">Red alga</name>
    <dbReference type="NCBI Taxonomy" id="2771"/>
    <lineage>
        <taxon>Eukaryota</taxon>
        <taxon>Rhodophyta</taxon>
        <taxon>Bangiophyceae</taxon>
        <taxon>Cyanidiales</taxon>
        <taxon>Cyanidiaceae</taxon>
        <taxon>Cyanidium</taxon>
    </lineage>
</organism>
<protein>
    <recommendedName>
        <fullName evidence="2">Small ribosomal subunit protein uS5c</fullName>
    </recommendedName>
    <alternativeName>
        <fullName>30S ribosomal protein S5, chloroplastic</fullName>
    </alternativeName>
</protein>
<reference key="1">
    <citation type="journal article" date="2000" name="J. Mol. Evol.">
        <title>The structure and gene repertoire of an ancient red algal plastid genome.</title>
        <authorList>
            <person name="Gloeckner G."/>
            <person name="Rosenthal A."/>
            <person name="Valentin K.-U."/>
        </authorList>
    </citation>
    <scope>NUCLEOTIDE SEQUENCE [LARGE SCALE GENOMIC DNA]</scope>
    <source>
        <strain>RK-1</strain>
    </source>
</reference>
<reference key="2">
    <citation type="journal article" date="1996" name="Plant Mol. Biol.">
        <title>A model for the evolution of the plastid sec apparatus inferred from secY gene phylogeny.</title>
        <authorList>
            <person name="Vogel H."/>
            <person name="Fischer S."/>
            <person name="Valentin K.-U."/>
        </authorList>
    </citation>
    <scope>NUCLEOTIDE SEQUENCE [GENOMIC DNA] OF 88-168</scope>
    <source>
        <strain>RK-1</strain>
    </source>
</reference>
<comment type="function">
    <text evidence="1">With S4 and S12 plays an important role in translational accuracy.</text>
</comment>
<comment type="subunit">
    <text evidence="1">Part of the 30S ribosomal subunit. Contacts protein S4 (By similarity).</text>
</comment>
<comment type="subcellular location">
    <subcellularLocation>
        <location>Plastid</location>
        <location>Chloroplast</location>
    </subcellularLocation>
</comment>
<comment type="domain">
    <text>The N-terminal domain interacts with the head of the 30S subunit; the C-terminal domain interacts with the body and contacts protein S4. The interaction surface between S4 and S5 is involved in control of translational fidelity.</text>
</comment>
<comment type="similarity">
    <text evidence="2">Belongs to the universal ribosomal protein uS5 family.</text>
</comment>
<proteinExistence type="inferred from homology"/>
<feature type="chain" id="PRO_0000131666" description="Small ribosomal subunit protein uS5c">
    <location>
        <begin position="1"/>
        <end position="168"/>
    </location>
</feature>
<feature type="domain" description="S5 DRBM">
    <location>
        <begin position="17"/>
        <end position="80"/>
    </location>
</feature>
<dbReference type="EMBL" id="AF022186">
    <property type="protein sequence ID" value="AAF12923.1"/>
    <property type="molecule type" value="Genomic_DNA"/>
</dbReference>
<dbReference type="RefSeq" id="NP_045171.1">
    <property type="nucleotide sequence ID" value="NC_001840.1"/>
</dbReference>
<dbReference type="SMR" id="Q9TLU8"/>
<dbReference type="GeneID" id="800242"/>
<dbReference type="GO" id="GO:0009507">
    <property type="term" value="C:chloroplast"/>
    <property type="evidence" value="ECO:0007669"/>
    <property type="project" value="UniProtKB-SubCell"/>
</dbReference>
<dbReference type="GO" id="GO:0015935">
    <property type="term" value="C:small ribosomal subunit"/>
    <property type="evidence" value="ECO:0007669"/>
    <property type="project" value="InterPro"/>
</dbReference>
<dbReference type="GO" id="GO:0019843">
    <property type="term" value="F:rRNA binding"/>
    <property type="evidence" value="ECO:0007669"/>
    <property type="project" value="UniProtKB-UniRule"/>
</dbReference>
<dbReference type="GO" id="GO:0003735">
    <property type="term" value="F:structural constituent of ribosome"/>
    <property type="evidence" value="ECO:0007669"/>
    <property type="project" value="InterPro"/>
</dbReference>
<dbReference type="GO" id="GO:0006412">
    <property type="term" value="P:translation"/>
    <property type="evidence" value="ECO:0007669"/>
    <property type="project" value="UniProtKB-UniRule"/>
</dbReference>
<dbReference type="FunFam" id="3.30.230.10:FF:000002">
    <property type="entry name" value="30S ribosomal protein S5"/>
    <property type="match status" value="1"/>
</dbReference>
<dbReference type="Gene3D" id="3.30.160.20">
    <property type="match status" value="1"/>
</dbReference>
<dbReference type="Gene3D" id="3.30.230.10">
    <property type="match status" value="1"/>
</dbReference>
<dbReference type="HAMAP" id="MF_01307_B">
    <property type="entry name" value="Ribosomal_uS5_B"/>
    <property type="match status" value="1"/>
</dbReference>
<dbReference type="InterPro" id="IPR020568">
    <property type="entry name" value="Ribosomal_Su5_D2-typ_SF"/>
</dbReference>
<dbReference type="InterPro" id="IPR000851">
    <property type="entry name" value="Ribosomal_uS5"/>
</dbReference>
<dbReference type="InterPro" id="IPR005712">
    <property type="entry name" value="Ribosomal_uS5_bac-type"/>
</dbReference>
<dbReference type="InterPro" id="IPR005324">
    <property type="entry name" value="Ribosomal_uS5_C"/>
</dbReference>
<dbReference type="InterPro" id="IPR013810">
    <property type="entry name" value="Ribosomal_uS5_N"/>
</dbReference>
<dbReference type="InterPro" id="IPR018192">
    <property type="entry name" value="Ribosomal_uS5_N_CS"/>
</dbReference>
<dbReference type="InterPro" id="IPR014721">
    <property type="entry name" value="Ribsml_uS5_D2-typ_fold_subgr"/>
</dbReference>
<dbReference type="NCBIfam" id="TIGR01021">
    <property type="entry name" value="rpsE_bact"/>
    <property type="match status" value="1"/>
</dbReference>
<dbReference type="PANTHER" id="PTHR48277">
    <property type="entry name" value="MITOCHONDRIAL RIBOSOMAL PROTEIN S5"/>
    <property type="match status" value="1"/>
</dbReference>
<dbReference type="PANTHER" id="PTHR48277:SF1">
    <property type="entry name" value="MITOCHONDRIAL RIBOSOMAL PROTEIN S5"/>
    <property type="match status" value="1"/>
</dbReference>
<dbReference type="Pfam" id="PF00333">
    <property type="entry name" value="Ribosomal_S5"/>
    <property type="match status" value="1"/>
</dbReference>
<dbReference type="Pfam" id="PF03719">
    <property type="entry name" value="Ribosomal_S5_C"/>
    <property type="match status" value="1"/>
</dbReference>
<dbReference type="SUPFAM" id="SSF54768">
    <property type="entry name" value="dsRNA-binding domain-like"/>
    <property type="match status" value="1"/>
</dbReference>
<dbReference type="SUPFAM" id="SSF54211">
    <property type="entry name" value="Ribosomal protein S5 domain 2-like"/>
    <property type="match status" value="1"/>
</dbReference>
<dbReference type="PROSITE" id="PS00585">
    <property type="entry name" value="RIBOSOMAL_S5"/>
    <property type="match status" value="1"/>
</dbReference>
<dbReference type="PROSITE" id="PS50881">
    <property type="entry name" value="S5_DSRBD"/>
    <property type="match status" value="1"/>
</dbReference>
<accession>Q9TLU8</accession>
<sequence length="168" mass="17516">MSRDTSANSSGQQNYTWSERVIQITRVTKVVKGGKKLSFRAIIVIGNNQGSVGVGVGKASDVIGAVKKGVSDCKKQIIEFPLTSSSTISHAVEGRFGAASVILKPSVQGSGVIAGGAMRTVIELSGIKNIVAKQLGTKNHLNNAKATINALSKLNSKSSQLSLMSFSN</sequence>
<keyword id="KW-0150">Chloroplast</keyword>
<keyword id="KW-0934">Plastid</keyword>
<keyword id="KW-0687">Ribonucleoprotein</keyword>
<keyword id="KW-0689">Ribosomal protein</keyword>
<keyword id="KW-0694">RNA-binding</keyword>
<keyword id="KW-0699">rRNA-binding</keyword>